<keyword id="KW-0235">DNA replication</keyword>
<keyword id="KW-0238">DNA-binding</keyword>
<keyword id="KW-1048">Host nucleus</keyword>
<keyword id="KW-0479">Metal-binding</keyword>
<keyword id="KW-0862">Zinc</keyword>
<keyword id="KW-0863">Zinc-finger</keyword>
<protein>
    <recommendedName>
        <fullName evidence="1">Major DNA-binding protein</fullName>
    </recommendedName>
</protein>
<organism>
    <name type="scientific">Bovine herpesvirus 2 (strain BMV)</name>
    <name type="common">BoHV-2</name>
    <name type="synonym">Bovine mammillitis virus</name>
    <dbReference type="NCBI Taxonomy" id="10296"/>
    <lineage>
        <taxon>Viruses</taxon>
        <taxon>Duplodnaviria</taxon>
        <taxon>Heunggongvirae</taxon>
        <taxon>Peploviricota</taxon>
        <taxon>Herviviricetes</taxon>
        <taxon>Herpesvirales</taxon>
        <taxon>Orthoherpesviridae</taxon>
        <taxon>Alphaherpesvirinae</taxon>
        <taxon>Simplexvirus</taxon>
        <taxon>Simplexvirus bovinealpha2</taxon>
    </lineage>
</organism>
<proteinExistence type="inferred from homology"/>
<feature type="chain" id="PRO_0000115748" description="Major DNA-binding protein">
    <location>
        <begin position="1"/>
        <end position="1186"/>
    </location>
</feature>
<feature type="zinc finger region" evidence="1">
    <location>
        <begin position="495"/>
        <end position="508"/>
    </location>
</feature>
<feature type="region of interest" description="Required for nuclear localization" evidence="1">
    <location>
        <begin position="1160"/>
        <end position="1186"/>
    </location>
</feature>
<feature type="short sequence motif" description="Required for filament formation" evidence="1">
    <location>
        <begin position="839"/>
        <end position="840"/>
    </location>
</feature>
<sequence length="1186" mass="127287">MENKQKTATTVKVSPGPLGYVYARRLPPEGLTELALLSARSADSDTAVLPLIAGLTVESGFDVNVAVVVGSRTTGVGGTGVSLKLMPSHYAPSAYVFHGGRHLAPSSAAPNLSLLCDRARVQFGFSSFKPKPCEAEGETTGEALCEHLGLNPNESLLYMVIAEGFKEAVYISNTILHMGGVGTVTIAGEEVRRIPIYPLQMFMPDYCRAVADPFNDRHRAIGEYFAYPLPFFNAKLASLLFGAAVGPAAVALRARNVDAVARAAAHLAFDENHEGAALPADITFTAFDPTGSKAGHRNPRECGGGFEQRLASVMAGDAALALESIMSMAVFEEPPTDIGTWPMLTCQESTAARAASIGAYLGRAAGLVGAMVFSSNSALHLTEVDDAGPADPKDPTKPSFYRFFLVPGTYVAANPQLDRDGRVVAGHEGRPIVPIVGGNHEFTCEHLATLCGFSPELLAKMLYYLERCDGGVILGRPEMDTFKYVSDSAHTDVPCCLCSLDNRHSCAHTTLLRLRARHPKFTSTTRGAIGIFGVMNSAYSDCDVLGNYASFSAIKRMDVQETARAIMQETYRSAVERVMAELENLNYIDAAVPTSPAKLESIITGREALQTVVSNVKQVVDGEVAQLMRALVEGRGFRFREALGEANHAMSLTLDPHASVPCPLLQMLGRRSNLAVYQDLALSQCHGVFEGQAVEGRNFRSQFQPVLRRRVLDMFNNGFLSARTLTVALTDGACISAPGLVSGQHAAAESGFEGDVARVNLGFPKEIRVKSRVLFAGAGPAASEAARARIAGLQSAYQKSDKRVDILLGPLGFMLKQFHATLFPNGKPPGSDNPNPQWFWTALQRNQLPARLLSREDISLIAFVKRFSVEYGAGNFVNLPPNNISELAMYYMANQILKYCDHSTYFINTLTALIAGSRRPPNAQAAAAWAPRGGTELEAQARSVVANPGDHPGAWTTMFASCNLLRPVMATRPMVVLGLSISKYYGMAGNDRVFQAGNLANLLGGKNACPLLIFDRTRKFVIACPRAGFVCAAVSAGSGAHESSLCEQLRAIIAEGGATVASDVFAAAAKSLGARVQQLQIEDWLALLEDEYLSEEMMELAGRALERGGGEWSLDAALDVAREAEAMVTRHVDAEETFDFGAFAEDGPADAGLAVHLQSRRRPLACSDLFGDAPAEKRNDLTLDML</sequence>
<comment type="function">
    <text evidence="1">Plays several crucial roles in viral infection. Participates in the opening of the viral DNA origin to initiate replication by interacting with the origin-binding protein. May disrupt loops, hairpins and other secondary structures present on ssDNA to reduce and eliminate pausing of viral DNA polymerase at specific sites during elongation. Promotes viral DNA recombination by performing strand-transfer, characterized by the ability to transfer a DNA strand from a linear duplex to a complementary single-stranded DNA circle. Can also catalyze the renaturation of complementary single strands. Additionally, reorganizes the host cell nucleus, leading to the formation of prereplicative sites and replication compartments. This process is driven by the protein which can form double-helical filaments in the absence of DNA.</text>
</comment>
<comment type="subunit">
    <text evidence="1">Homooligomers. Forms double-helical filaments necessary for the formation of replication compartments within the host nucleus. Interacts with the origin-binding protein. Interacts with the helicase primase complex; this interaction stimulates primer synthesis activity of the helicase-primase complex. Interacts with the DNA polymerase. Interacts with the alkaline exonuclease; this interaction increases its nuclease processivity.</text>
</comment>
<comment type="subcellular location">
    <subcellularLocation>
        <location evidence="1">Host nucleus</location>
    </subcellularLocation>
    <text evidence="1">In the absence of DNA replication, found in the nuclear framework-associated structures (prereplicative sites). As viral DNA replication proceeds, it migrates to globular intranuclear structures (replication compartments).</text>
</comment>
<comment type="similarity">
    <text evidence="1">Belongs to the herpesviridae major DNA-binding protein family.</text>
</comment>
<accession>P12639</accession>
<gene>
    <name evidence="1" type="primary">DBP</name>
    <name type="synonym">UL29</name>
</gene>
<evidence type="ECO:0000255" key="1">
    <source>
        <dbReference type="HAMAP-Rule" id="MF_04007"/>
    </source>
</evidence>
<organismHost>
    <name type="scientific">Bos taurus</name>
    <name type="common">Bovine</name>
    <dbReference type="NCBI Taxonomy" id="9913"/>
</organismHost>
<dbReference type="EMBL" id="AH002369">
    <property type="protein sequence ID" value="AAA46051.1"/>
    <property type="molecule type" value="Genomic_DNA"/>
</dbReference>
<dbReference type="PIR" id="A29242">
    <property type="entry name" value="DNBEBG"/>
</dbReference>
<dbReference type="SMR" id="P12639"/>
<dbReference type="GO" id="GO:0042025">
    <property type="term" value="C:host cell nucleus"/>
    <property type="evidence" value="ECO:0007669"/>
    <property type="project" value="UniProtKB-SubCell"/>
</dbReference>
<dbReference type="GO" id="GO:0003697">
    <property type="term" value="F:single-stranded DNA binding"/>
    <property type="evidence" value="ECO:0007669"/>
    <property type="project" value="InterPro"/>
</dbReference>
<dbReference type="GO" id="GO:0008270">
    <property type="term" value="F:zinc ion binding"/>
    <property type="evidence" value="ECO:0007669"/>
    <property type="project" value="UniProtKB-KW"/>
</dbReference>
<dbReference type="GO" id="GO:0006260">
    <property type="term" value="P:DNA replication"/>
    <property type="evidence" value="ECO:0007669"/>
    <property type="project" value="UniProtKB-KW"/>
</dbReference>
<dbReference type="FunFam" id="1.20.190.40:FF:000002">
    <property type="entry name" value="Major DNA-binding protein"/>
    <property type="match status" value="1"/>
</dbReference>
<dbReference type="Gene3D" id="1.10.150.560">
    <property type="match status" value="1"/>
</dbReference>
<dbReference type="Gene3D" id="1.20.190.40">
    <property type="entry name" value="Viral ssDNA binding protein, head domain"/>
    <property type="match status" value="2"/>
</dbReference>
<dbReference type="HAMAP" id="MF_04007">
    <property type="entry name" value="HSV_DNBI"/>
    <property type="match status" value="1"/>
</dbReference>
<dbReference type="InterPro" id="IPR035989">
    <property type="entry name" value="DBP_sf"/>
</dbReference>
<dbReference type="InterPro" id="IPR043031">
    <property type="entry name" value="Viral_ssDBP_head"/>
</dbReference>
<dbReference type="InterPro" id="IPR000635">
    <property type="entry name" value="Viral_ssDNA-bd"/>
</dbReference>
<dbReference type="Pfam" id="PF00747">
    <property type="entry name" value="Viral_DNA_bp"/>
    <property type="match status" value="1"/>
</dbReference>
<dbReference type="SUPFAM" id="SSF118208">
    <property type="entry name" value="Viral ssDNA binding protein"/>
    <property type="match status" value="1"/>
</dbReference>
<name>DNBI_BHV2B</name>
<reference key="1">
    <citation type="journal article" date="1988" name="Virology">
        <title>Conservation of a gene cluster including glycoprotein B in bovine herpesvirus type 2 (BHV-2) and herpes simplex virus type 1 (HSV-1).</title>
        <authorList>
            <person name="Hammerschmidt W."/>
            <person name="Conraths F."/>
            <person name="Mankertz J."/>
            <person name="Pauli G."/>
            <person name="Ludwig H."/>
            <person name="Buhk H.-J."/>
        </authorList>
    </citation>
    <scope>NUCLEOTIDE SEQUENCE [GENOMIC DNA]</scope>
</reference>
<reference key="2">
    <citation type="journal article" date="1988" name="Virology">
        <title>Common epitopes of glycoprotein B map within the major DNA-binding proteins of bovine herpesvirus type 2 (BHV-2) and herpes simplex virus type 1 (HSV-1).</title>
        <authorList>
            <person name="Hammerschmidt W."/>
            <person name="Conraths F."/>
            <person name="Mankertz J."/>
            <person name="Buhk H.-J."/>
            <person name="Pauli G."/>
            <person name="Ludwig H."/>
        </authorList>
    </citation>
    <scope>NUCLEOTIDE SEQUENCE [GENOMIC DNA] OF 1058-1186</scope>
</reference>